<gene>
    <name evidence="3" type="primary">cetZ4</name>
    <name evidence="5" type="synonym">ftsZ6</name>
    <name evidence="5" type="ordered locus">HVO_A0035</name>
    <name evidence="6" type="ORF">C498_11071</name>
</gene>
<organism>
    <name type="scientific">Haloferax volcanii (strain ATCC 29605 / DSM 3757 / JCM 8879 / NBRC 14742 / NCIMB 2012 / VKM B-1768 / DS2)</name>
    <name type="common">Halobacterium volcanii</name>
    <dbReference type="NCBI Taxonomy" id="309800"/>
    <lineage>
        <taxon>Archaea</taxon>
        <taxon>Methanobacteriati</taxon>
        <taxon>Methanobacteriota</taxon>
        <taxon>Stenosarchaea group</taxon>
        <taxon>Halobacteria</taxon>
        <taxon>Halobacteriales</taxon>
        <taxon>Haloferacaceae</taxon>
        <taxon>Haloferax</taxon>
    </lineage>
</organism>
<reference key="1">
    <citation type="journal article" date="2010" name="PLoS ONE">
        <title>The complete genome sequence of Haloferax volcanii DS2, a model archaeon.</title>
        <authorList>
            <person name="Hartman A.L."/>
            <person name="Norais C."/>
            <person name="Badger J.H."/>
            <person name="Delmas S."/>
            <person name="Haldenby S."/>
            <person name="Madupu R."/>
            <person name="Robinson J."/>
            <person name="Khouri H."/>
            <person name="Ren Q."/>
            <person name="Lowe T.M."/>
            <person name="Maupin-Furlow J."/>
            <person name="Pohlschroder M."/>
            <person name="Daniels C."/>
            <person name="Pfeiffer F."/>
            <person name="Allers T."/>
            <person name="Eisen J.A."/>
        </authorList>
    </citation>
    <scope>NUCLEOTIDE SEQUENCE [LARGE SCALE GENOMIC DNA]</scope>
    <source>
        <strain>ATCC 29605 / DSM 3757 / JCM 8879 / NBRC 14742 / NCIMB 2012 / VKM B-1768 / DS2</strain>
    </source>
</reference>
<reference key="2">
    <citation type="journal article" date="2014" name="PLoS Genet.">
        <title>Phylogenetically driven sequencing of extremely halophilic archaea reveals strategies for static and dynamic osmo-response.</title>
        <authorList>
            <person name="Becker E.A."/>
            <person name="Seitzer P.M."/>
            <person name="Tritt A."/>
            <person name="Larsen D."/>
            <person name="Krusor M."/>
            <person name="Yao A.I."/>
            <person name="Wu D."/>
            <person name="Madern D."/>
            <person name="Eisen J.A."/>
            <person name="Darling A.E."/>
            <person name="Facciotti M.T."/>
        </authorList>
    </citation>
    <scope>NUCLEOTIDE SEQUENCE [LARGE SCALE GENOMIC DNA]</scope>
    <source>
        <strain>ATCC 29605 / DSM 3757 / JCM 8879 / NBRC 14742 / NCIMB 2012 / VKM B-1768 / DS2</strain>
    </source>
</reference>
<reference key="3">
    <citation type="journal article" date="2015" name="Nature">
        <title>CetZ tubulin-like proteins control archaeal cell shape.</title>
        <authorList>
            <person name="Duggin I.G."/>
            <person name="Aylett C.H."/>
            <person name="Walsh J.C."/>
            <person name="Michie K.A."/>
            <person name="Wang Q."/>
            <person name="Turnbull L."/>
            <person name="Dawson E.M."/>
            <person name="Harry E.J."/>
            <person name="Whitchurch C.B."/>
            <person name="Amos L.A."/>
            <person name="Loewe J."/>
        </authorList>
    </citation>
    <scope>DISRUPTION PHENOTYPE</scope>
</reference>
<keyword id="KW-0133">Cell shape</keyword>
<keyword id="KW-0963">Cytoplasm</keyword>
<keyword id="KW-0342">GTP-binding</keyword>
<keyword id="KW-0547">Nucleotide-binding</keyword>
<keyword id="KW-0614">Plasmid</keyword>
<keyword id="KW-1185">Reference proteome</keyword>
<proteinExistence type="inferred from homology"/>
<accession>D4GQ67</accession>
<comment type="function">
    <text evidence="1">Involved in cell shape control.</text>
</comment>
<comment type="subcellular location">
    <subcellularLocation>
        <location evidence="1">Cytoplasm</location>
    </subcellularLocation>
</comment>
<comment type="disruption phenotype">
    <text evidence="2">Does not affect motility. No differences in growth rate or cell size.</text>
</comment>
<comment type="similarity">
    <text evidence="1 4">Belongs to the CetZ family.</text>
</comment>
<name>CETZ4_HALVD</name>
<sequence length="394" mass="41158">MKLGVVGLGQAGGKIVDALLEYDQRTNCHIVHDALTVNTATADLNALEHIPADARVLIGKSQVGGQGVGGDNELGATITTEDITEIQHVIDTISVHEIDAFLLVAALGGGTGSGALPVVGRHLKQLYTEPVYGLGILPSTNEGGLYSLNAARSLQTAVRELDNLLIFDNDAHRQANESLTGGYAAINRELATRLGVLFGAGDIDTGTANPESVVDASEIINTLKGGGVSTLGYASQSLEEEDGAEAAGLLSRFKRESSTDSAGGTNRITSLVRRATLGRLTLPVEPANVSIDRGLVIVAGPSDCLNRKGIERGRTWVEEQTGCLSIRGGDYPLPESNTVAVVVLFSGISGADRLHELRSIGSEAQTTGAERTGSSDRHLESILGDDADELDSLF</sequence>
<dbReference type="EMBL" id="CP001955">
    <property type="protein sequence ID" value="ADE01805.1"/>
    <property type="molecule type" value="Genomic_DNA"/>
</dbReference>
<dbReference type="EMBL" id="AOHU01000087">
    <property type="protein sequence ID" value="ELY28675.1"/>
    <property type="molecule type" value="Genomic_DNA"/>
</dbReference>
<dbReference type="RefSeq" id="WP_004043403.1">
    <property type="nucleotide sequence ID" value="NC_013966.1"/>
</dbReference>
<dbReference type="SMR" id="D4GQ67"/>
<dbReference type="PaxDb" id="309800-C498_11071"/>
<dbReference type="EnsemblBacteria" id="ADE01805">
    <property type="protein sequence ID" value="ADE01805"/>
    <property type="gene ID" value="HVO_A0035"/>
</dbReference>
<dbReference type="GeneID" id="31787393"/>
<dbReference type="KEGG" id="hvo:HVO_A0035"/>
<dbReference type="PATRIC" id="fig|309800.29.peg.2114"/>
<dbReference type="eggNOG" id="arCOG02202">
    <property type="taxonomic scope" value="Archaea"/>
</dbReference>
<dbReference type="HOGENOM" id="CLU_058152_0_0_2"/>
<dbReference type="OrthoDB" id="329751at2157"/>
<dbReference type="Proteomes" id="UP000008243">
    <property type="component" value="Plasmid pHV4"/>
</dbReference>
<dbReference type="Proteomes" id="UP000011532">
    <property type="component" value="Unassembled WGS sequence"/>
</dbReference>
<dbReference type="GO" id="GO:0032153">
    <property type="term" value="C:cell division site"/>
    <property type="evidence" value="ECO:0007669"/>
    <property type="project" value="TreeGrafter"/>
</dbReference>
<dbReference type="GO" id="GO:0005737">
    <property type="term" value="C:cytoplasm"/>
    <property type="evidence" value="ECO:0007669"/>
    <property type="project" value="UniProtKB-SubCell"/>
</dbReference>
<dbReference type="GO" id="GO:0005874">
    <property type="term" value="C:microtubule"/>
    <property type="evidence" value="ECO:0007669"/>
    <property type="project" value="InterPro"/>
</dbReference>
<dbReference type="GO" id="GO:0005525">
    <property type="term" value="F:GTP binding"/>
    <property type="evidence" value="ECO:0007669"/>
    <property type="project" value="UniProtKB-UniRule"/>
</dbReference>
<dbReference type="GO" id="GO:0003924">
    <property type="term" value="F:GTPase activity"/>
    <property type="evidence" value="ECO:0007669"/>
    <property type="project" value="InterPro"/>
</dbReference>
<dbReference type="GO" id="GO:0051301">
    <property type="term" value="P:cell division"/>
    <property type="evidence" value="ECO:0007669"/>
    <property type="project" value="TreeGrafter"/>
</dbReference>
<dbReference type="GO" id="GO:0007017">
    <property type="term" value="P:microtubule-based process"/>
    <property type="evidence" value="ECO:0007669"/>
    <property type="project" value="InterPro"/>
</dbReference>
<dbReference type="GO" id="GO:0008360">
    <property type="term" value="P:regulation of cell shape"/>
    <property type="evidence" value="ECO:0007669"/>
    <property type="project" value="UniProtKB-UniRule"/>
</dbReference>
<dbReference type="CDD" id="cd02202">
    <property type="entry name" value="CetZ_tubulin-like"/>
    <property type="match status" value="1"/>
</dbReference>
<dbReference type="Gene3D" id="3.30.1330.20">
    <property type="entry name" value="Tubulin/FtsZ, C-terminal domain"/>
    <property type="match status" value="1"/>
</dbReference>
<dbReference type="Gene3D" id="3.40.50.1440">
    <property type="entry name" value="Tubulin/FtsZ, GTPase domain"/>
    <property type="match status" value="1"/>
</dbReference>
<dbReference type="HAMAP" id="MF_01946">
    <property type="entry name" value="CetZ"/>
    <property type="match status" value="1"/>
</dbReference>
<dbReference type="InterPro" id="IPR032907">
    <property type="entry name" value="CetZ"/>
</dbReference>
<dbReference type="InterPro" id="IPR048737">
    <property type="entry name" value="CetZ_C"/>
</dbReference>
<dbReference type="InterPro" id="IPR045061">
    <property type="entry name" value="FtsZ/CetZ"/>
</dbReference>
<dbReference type="InterPro" id="IPR037103">
    <property type="entry name" value="Tubulin/FtsZ-like_C"/>
</dbReference>
<dbReference type="InterPro" id="IPR036525">
    <property type="entry name" value="Tubulin/FtsZ_GTPase_sf"/>
</dbReference>
<dbReference type="InterPro" id="IPR017975">
    <property type="entry name" value="Tubulin_CS"/>
</dbReference>
<dbReference type="InterPro" id="IPR003008">
    <property type="entry name" value="Tubulin_FtsZ_GTPase"/>
</dbReference>
<dbReference type="PANTHER" id="PTHR30314">
    <property type="entry name" value="CELL DIVISION PROTEIN FTSZ-RELATED"/>
    <property type="match status" value="1"/>
</dbReference>
<dbReference type="PANTHER" id="PTHR30314:SF10">
    <property type="entry name" value="TUBULIN-LIKE PROTEIN CETZ"/>
    <property type="match status" value="1"/>
</dbReference>
<dbReference type="Pfam" id="PF21011">
    <property type="entry name" value="CetZ_C"/>
    <property type="match status" value="1"/>
</dbReference>
<dbReference type="Pfam" id="PF00091">
    <property type="entry name" value="Tubulin"/>
    <property type="match status" value="1"/>
</dbReference>
<dbReference type="SMART" id="SM00864">
    <property type="entry name" value="Tubulin"/>
    <property type="match status" value="1"/>
</dbReference>
<dbReference type="SUPFAM" id="SSF52490">
    <property type="entry name" value="Tubulin nucleotide-binding domain-like"/>
    <property type="match status" value="1"/>
</dbReference>
<dbReference type="PROSITE" id="PS00227">
    <property type="entry name" value="TUBULIN"/>
    <property type="match status" value="1"/>
</dbReference>
<feature type="chain" id="PRO_0000432186" description="Tubulin-like protein CetZ4">
    <location>
        <begin position="1"/>
        <end position="394"/>
    </location>
</feature>
<feature type="binding site" evidence="1">
    <location>
        <begin position="10"/>
        <end position="14"/>
    </location>
    <ligand>
        <name>GTP</name>
        <dbReference type="ChEBI" id="CHEBI:37565"/>
    </ligand>
</feature>
<feature type="binding site" evidence="1">
    <location>
        <begin position="110"/>
        <end position="112"/>
    </location>
    <ligand>
        <name>GTP</name>
        <dbReference type="ChEBI" id="CHEBI:37565"/>
    </ligand>
</feature>
<feature type="binding site" evidence="1">
    <location>
        <position position="142"/>
    </location>
    <ligand>
        <name>GTP</name>
        <dbReference type="ChEBI" id="CHEBI:37565"/>
    </ligand>
</feature>
<feature type="binding site" evidence="1">
    <location>
        <position position="169"/>
    </location>
    <ligand>
        <name>GTP</name>
        <dbReference type="ChEBI" id="CHEBI:37565"/>
    </ligand>
</feature>
<feature type="binding site" evidence="1">
    <location>
        <position position="187"/>
    </location>
    <ligand>
        <name>GTP</name>
        <dbReference type="ChEBI" id="CHEBI:37565"/>
    </ligand>
</feature>
<protein>
    <recommendedName>
        <fullName evidence="4">Tubulin-like protein CetZ4</fullName>
    </recommendedName>
    <alternativeName>
        <fullName evidence="3">Cell-structure-related euryarchaeota tubulin/FtsZ homolog 4</fullName>
    </alternativeName>
</protein>
<evidence type="ECO:0000255" key="1">
    <source>
        <dbReference type="HAMAP-Rule" id="MF_01946"/>
    </source>
</evidence>
<evidence type="ECO:0000269" key="2">
    <source>
    </source>
</evidence>
<evidence type="ECO:0000303" key="3">
    <source>
    </source>
</evidence>
<evidence type="ECO:0000305" key="4"/>
<evidence type="ECO:0000312" key="5">
    <source>
        <dbReference type="EMBL" id="ADE01805.1"/>
    </source>
</evidence>
<evidence type="ECO:0000312" key="6">
    <source>
        <dbReference type="EMBL" id="ELY28675.1"/>
    </source>
</evidence>
<geneLocation type="plasmid" evidence="5">
    <name>pHV4</name>
</geneLocation>